<gene>
    <name type="primary">csm2</name>
    <name type="ordered locus">MT2889</name>
</gene>
<proteinExistence type="inferred from homology"/>
<sequence length="124" mass="14287">MSVIQDDYVKQAEVIRGLPKKKNGFELTTTQLRVLLSLTAQLFDEAQQSANPTLPRQLKEKVQYLRVRFVYQSGREDAVKTFVRNAKLLEALEGIGDSRDGLLRFCRYMEALAAYKKYLDPKDK</sequence>
<feature type="chain" id="PRO_0000427836" description="CRISPR system Cms protein Csm2">
    <location>
        <begin position="1"/>
        <end position="124"/>
    </location>
</feature>
<protein>
    <recommendedName>
        <fullName>CRISPR system Cms protein Csm2</fullName>
    </recommendedName>
    <alternativeName>
        <fullName>CRISPR type III A-associated protein Csm2</fullName>
    </alternativeName>
</protein>
<dbReference type="EMBL" id="AE000516">
    <property type="protein sequence ID" value="AAK47214.1"/>
    <property type="molecule type" value="Genomic_DNA"/>
</dbReference>
<dbReference type="PIR" id="A70692">
    <property type="entry name" value="A70692"/>
</dbReference>
<dbReference type="RefSeq" id="WP_003414296.1">
    <property type="nucleotide sequence ID" value="NZ_KK341227.1"/>
</dbReference>
<dbReference type="SMR" id="P9WJG0"/>
<dbReference type="KEGG" id="mtc:MT2889"/>
<dbReference type="PATRIC" id="fig|83331.31.peg.3118"/>
<dbReference type="HOGENOM" id="CLU_131491_1_0_11"/>
<dbReference type="Proteomes" id="UP000001020">
    <property type="component" value="Chromosome"/>
</dbReference>
<dbReference type="GO" id="GO:0003723">
    <property type="term" value="F:RNA binding"/>
    <property type="evidence" value="ECO:0007669"/>
    <property type="project" value="UniProtKB-KW"/>
</dbReference>
<dbReference type="GO" id="GO:0051607">
    <property type="term" value="P:defense response to virus"/>
    <property type="evidence" value="ECO:0007669"/>
    <property type="project" value="UniProtKB-KW"/>
</dbReference>
<dbReference type="CDD" id="cd09647">
    <property type="entry name" value="Csm2_III-A"/>
    <property type="match status" value="1"/>
</dbReference>
<dbReference type="InterPro" id="IPR010149">
    <property type="entry name" value="CRISPR-assoc_prot_Csm2_III-A"/>
</dbReference>
<dbReference type="NCBIfam" id="TIGR01870">
    <property type="entry name" value="cas_TM1810_Csm2"/>
    <property type="match status" value="1"/>
</dbReference>
<dbReference type="Pfam" id="PF03750">
    <property type="entry name" value="Csm2_III-A"/>
    <property type="match status" value="1"/>
</dbReference>
<reference key="1">
    <citation type="journal article" date="2002" name="J. Bacteriol.">
        <title>Whole-genome comparison of Mycobacterium tuberculosis clinical and laboratory strains.</title>
        <authorList>
            <person name="Fleischmann R.D."/>
            <person name="Alland D."/>
            <person name="Eisen J.A."/>
            <person name="Carpenter L."/>
            <person name="White O."/>
            <person name="Peterson J.D."/>
            <person name="DeBoy R.T."/>
            <person name="Dodson R.J."/>
            <person name="Gwinn M.L."/>
            <person name="Haft D.H."/>
            <person name="Hickey E.K."/>
            <person name="Kolonay J.F."/>
            <person name="Nelson W.C."/>
            <person name="Umayam L.A."/>
            <person name="Ermolaeva M.D."/>
            <person name="Salzberg S.L."/>
            <person name="Delcher A."/>
            <person name="Utterback T.R."/>
            <person name="Weidman J.F."/>
            <person name="Khouri H.M."/>
            <person name="Gill J."/>
            <person name="Mikula A."/>
            <person name="Bishai W."/>
            <person name="Jacobs W.R. Jr."/>
            <person name="Venter J.C."/>
            <person name="Fraser C.M."/>
        </authorList>
    </citation>
    <scope>NUCLEOTIDE SEQUENCE [LARGE SCALE GENOMIC DNA]</scope>
    <source>
        <strain>CDC 1551 / Oshkosh</strain>
    </source>
</reference>
<organism>
    <name type="scientific">Mycobacterium tuberculosis (strain CDC 1551 / Oshkosh)</name>
    <dbReference type="NCBI Taxonomy" id="83331"/>
    <lineage>
        <taxon>Bacteria</taxon>
        <taxon>Bacillati</taxon>
        <taxon>Actinomycetota</taxon>
        <taxon>Actinomycetes</taxon>
        <taxon>Mycobacteriales</taxon>
        <taxon>Mycobacteriaceae</taxon>
        <taxon>Mycobacterium</taxon>
        <taxon>Mycobacterium tuberculosis complex</taxon>
    </lineage>
</organism>
<keyword id="KW-0051">Antiviral defense</keyword>
<keyword id="KW-1185">Reference proteome</keyword>
<keyword id="KW-0694">RNA-binding</keyword>
<evidence type="ECO:0000250" key="1">
    <source>
        <dbReference type="UniProtKB" id="A0A0A7HIX1"/>
    </source>
</evidence>
<evidence type="ECO:0000250" key="2">
    <source>
        <dbReference type="UniProtKB" id="P9WJG1"/>
    </source>
</evidence>
<evidence type="ECO:0000305" key="3"/>
<name>CSM2_MYCTO</name>
<accession>P9WJG0</accession>
<accession>F2GLB2</accession>
<accession>L0TDN3</accession>
<accession>P71630</accession>
<accession>Q7D6I2</accession>
<comment type="function">
    <text evidence="1">CRISPR (clustered regularly interspaced short palindromic repeat) is an adaptive immune system that provides protection against mobile genetic elements (viruses, transposable elements and conjugative plasmids). CRISPR clusters contain spacers, sequences complementary to antecedent mobile elements, and target invading nucleic acids. CRISPR clusters are transcribed and processed into CRISPR RNA (crRNA). The type III-A Csm effector complex binds crRNA and acts as a crRNA-guided RNase, DNase and cyclic oligoadenylate synthase; binding of target RNA cognate to the crRNA is required for all activities.</text>
</comment>
<comment type="function">
    <text evidence="1">This subunit may be involved in monitoring complementarity of crRNA and target RNA.</text>
</comment>
<comment type="subunit">
    <text evidence="2">Part of the Csm effector complex that includes Cas10, Csm2, Csm3, Csm4 and Csm5.</text>
</comment>
<comment type="miscellaneous">
    <text evidence="3">Encoded in a type III-A CRISPR locus.</text>
</comment>
<comment type="similarity">
    <text evidence="3">Belongs to the CRISPR-associated Csm2 family.</text>
</comment>